<organism>
    <name type="scientific">Marchantia polymorpha</name>
    <name type="common">Common liverwort</name>
    <name type="synonym">Marchantia aquatica</name>
    <dbReference type="NCBI Taxonomy" id="3197"/>
    <lineage>
        <taxon>Eukaryota</taxon>
        <taxon>Viridiplantae</taxon>
        <taxon>Streptophyta</taxon>
        <taxon>Embryophyta</taxon>
        <taxon>Marchantiophyta</taxon>
        <taxon>Marchantiopsida</taxon>
        <taxon>Marchantiidae</taxon>
        <taxon>Marchantiales</taxon>
        <taxon>Marchantiaceae</taxon>
        <taxon>Marchantia</taxon>
    </lineage>
</organism>
<name>YCF2_MARPO</name>
<protein>
    <recommendedName>
        <fullName evidence="1">Protein Ycf2</fullName>
    </recommendedName>
</protein>
<reference key="1">
    <citation type="journal article" date="1986" name="Nature">
        <title>Chloroplast gene organization deduced from complete sequence of liverwort Marchantia polymorpha chloroplast DNA.</title>
        <authorList>
            <person name="Ohyama K."/>
            <person name="Fukuzawa H."/>
            <person name="Kohchi T."/>
            <person name="Shirai H."/>
            <person name="Sano T."/>
            <person name="Sano S."/>
            <person name="Umesono K."/>
            <person name="Shiki Y."/>
            <person name="Takeuchi M."/>
            <person name="Chang Z."/>
            <person name="Aota S."/>
            <person name="Inokuchi H."/>
            <person name="Ozeki H."/>
        </authorList>
    </citation>
    <scope>NUCLEOTIDE SEQUENCE [LARGE SCALE GENOMIC DNA]</scope>
</reference>
<reference key="2">
    <citation type="journal article" date="1988" name="J. Mol. Biol.">
        <title>Structure and organization of Marchantia polymorpha chloroplast genome. II. Gene organization of the large single copy region from rps'12 to atpB.</title>
        <authorList>
            <person name="Umesono K."/>
            <person name="Inokuchi H."/>
            <person name="Shiki Y."/>
            <person name="Takeuchi M."/>
            <person name="Chang Z."/>
            <person name="Fukuzawa H."/>
            <person name="Kohchi T."/>
            <person name="Shirai H."/>
            <person name="Ohyama K."/>
            <person name="Ozeki H."/>
        </authorList>
    </citation>
    <scope>NUCLEOTIDE SEQUENCE [GENOMIC DNA]</scope>
</reference>
<evidence type="ECO:0000255" key="1">
    <source>
        <dbReference type="HAMAP-Rule" id="MF_01330"/>
    </source>
</evidence>
<keyword id="KW-0067">ATP-binding</keyword>
<keyword id="KW-0150">Chloroplast</keyword>
<keyword id="KW-0547">Nucleotide-binding</keyword>
<keyword id="KW-0934">Plastid</keyword>
<dbReference type="EMBL" id="X04465">
    <property type="protein sequence ID" value="CAA28078.1"/>
    <property type="molecule type" value="Genomic_DNA"/>
</dbReference>
<dbReference type="PIR" id="S01591">
    <property type="entry name" value="A05037"/>
</dbReference>
<dbReference type="RefSeq" id="NP_039292.1">
    <property type="nucleotide sequence ID" value="NC_001319.1"/>
</dbReference>
<dbReference type="GO" id="GO:0009570">
    <property type="term" value="C:chloroplast stroma"/>
    <property type="evidence" value="ECO:0007669"/>
    <property type="project" value="UniProtKB-SubCell"/>
</dbReference>
<dbReference type="GO" id="GO:0005524">
    <property type="term" value="F:ATP binding"/>
    <property type="evidence" value="ECO:0007669"/>
    <property type="project" value="UniProtKB-KW"/>
</dbReference>
<dbReference type="GO" id="GO:0016887">
    <property type="term" value="F:ATP hydrolysis activity"/>
    <property type="evidence" value="ECO:0007669"/>
    <property type="project" value="InterPro"/>
</dbReference>
<dbReference type="CDD" id="cd19505">
    <property type="entry name" value="RecA-like_Ycf2"/>
    <property type="match status" value="1"/>
</dbReference>
<dbReference type="Gene3D" id="1.10.8.60">
    <property type="match status" value="1"/>
</dbReference>
<dbReference type="Gene3D" id="3.40.50.300">
    <property type="entry name" value="P-loop containing nucleotide triphosphate hydrolases"/>
    <property type="match status" value="1"/>
</dbReference>
<dbReference type="HAMAP" id="MF_01330">
    <property type="entry name" value="Ycf2"/>
    <property type="match status" value="1"/>
</dbReference>
<dbReference type="InterPro" id="IPR003593">
    <property type="entry name" value="AAA+_ATPase"/>
</dbReference>
<dbReference type="InterPro" id="IPR003959">
    <property type="entry name" value="ATPase_AAA_core"/>
</dbReference>
<dbReference type="InterPro" id="IPR027417">
    <property type="entry name" value="P-loop_NTPase"/>
</dbReference>
<dbReference type="InterPro" id="IPR008543">
    <property type="entry name" value="Uncharacterised_Ycf2"/>
</dbReference>
<dbReference type="PANTHER" id="PTHR33078:SF100">
    <property type="entry name" value="PROTEIN YCF2"/>
    <property type="match status" value="1"/>
</dbReference>
<dbReference type="PANTHER" id="PTHR33078">
    <property type="entry name" value="PROTEIN YCF2-RELATED"/>
    <property type="match status" value="1"/>
</dbReference>
<dbReference type="Pfam" id="PF00004">
    <property type="entry name" value="AAA"/>
    <property type="match status" value="1"/>
</dbReference>
<dbReference type="SMART" id="SM00382">
    <property type="entry name" value="AAA"/>
    <property type="match status" value="1"/>
</dbReference>
<dbReference type="SUPFAM" id="SSF52540">
    <property type="entry name" value="P-loop containing nucleoside triphosphate hydrolases"/>
    <property type="match status" value="1"/>
</dbReference>
<comment type="function">
    <text>Probable ATPase of unknown function. Its presence in a non-photosynthetic plant (Epifagus virginiana) and experiments in tobacco indicate that it has an essential function which is probably not related to photosynthesis.</text>
</comment>
<comment type="subcellular location">
    <subcellularLocation>
        <location evidence="1">Plastid</location>
        <location evidence="1">Chloroplast stroma</location>
    </subcellularLocation>
</comment>
<comment type="similarity">
    <text evidence="1">Belongs to the Ycf2 family.</text>
</comment>
<proteinExistence type="inferred from homology"/>
<sequence length="2136" mass="259914">MKQKLPKKKSLYKNLDLDEIQKIQNLGNPYTKWSLIRLLIAIFSNKRNFSTLLDFQILTSLFFRDLYNSKKKKKFLLNILVFLTLPFFVYILIDKSIVEQQNFDFLKIQKQNFIEKNNKSILKNNFYFLNTKFDIFLHNFFSLKKKKWYKNSLLNLIDFRSILKKKEILNLHWWKFLVLEQIQSNWKISEESLSELKIVLEQKNIDELKHFFEFYINQKIYPNNNWEYYFYSIFINQLKIDIKNSKYNKNSIGFEVFLAFCEKLLFEVEFLSKPNNNNLQMKLNCLENFSFLDIFCILNKKLPWVNKKIFKNLQNFNESDKKLIESFFLLKIKGNLYFKNYIEFVTWQSYKKDCLDFNKFNELNNSEIYIKIEELFSDYIYKFSKYILYEGKKSKTIIKQSFNNNIYYKKLNSIFNFNTIFYFDSNNLLFDWLKKNYYINNKPFLKSFLIYSSISNQFILFFKQKNSKSFNKNLVKKNSKDVITNVFSKENKIEINNFSKSIYYAFFEILSINEIDNKFVINKISLKNINKKKQKRFYLNKIKSSDNFRFINLWKIKNYSSQQFVSNNSFLLNPAFEILQQNYYLKKKNILFFKKLNEVFSNFFYFQYYKCKKLNIFLKFASLEKILKKRNKKFTISIKLFKKFYKNKLNENGEYKIESQILQNEKELNKKRKKNFQFNPNIKILSFYNSSKKNIYLQNKYFFNKNLINNKLITWKKISNKLVISNSEYNKIIWNKKNMKFFSFSKNSVLDTFFFNKKSFNIITVIFDKLKKIQLNFQEIQKILNCFSLFFNSKNIKKTKIFKNSYFINENLTTTFSFNDKEFNIFFLELFISEINNDFLMRFFKKYLYYRIYKDKEILFNPIENRQLLQNFFEKTKILTFIDFLQDPELNYNNRFIFHLEKKTIKNNNLLYLRLLKIFLKDKRNFLLINEIKSFIEKKNNLFIKSQLSNVLLVKNSYKFFDNIFNFHFLKQKEKNIEIILNNQNYFEKSLLKKTYLKNLNLNNSYSKFSYKIFIFQLLNILNKNNYKTFQWISELIFYSKNLNYKIQNKIEKNNYCYNKNISYKKKKIKTVNFFEKNNLFQTNNSWFFTLEWWEYNTYILLQIIQETFFQITDVLEYFKKKKIIEKNLKFFLKSKKISLKTLSFHNFKLKWNLRFFNEINYKKNYLLNFLWSDFNLINNCNNLYWVIFSLVIFIFLYYQKIFSIIIGSDCFHLWKNFEIIQYLTDRSRSLYFTKLTRRNKTALNKTENLLSYFFQNLTHYITNIKFYLLTKKNLKKWLINNKTLDLSRRKRKLLVQSLITHNKIQNYGFELNSNKQFFTSYFGYQITNQQGLLYFQYLAQFFQKNLINNSLDLANKWIVFSFWHKIFSSQKLRQTNNIELGFQNIPVPLQFGLSYSKGILLIGPIETGRSYLIKNLAAESYVPLFKISINKLLYNKPDVITESWMNILIESLRRLNLTLDFAKKMSPCIIWIQNIHQLNVNRLTQNVESDPTFLLGILLKYFQTDFSKTKKNNIIVIGSTHLPKKVDPALISPNRLDKIINVRLFNISQRKKQFPLLLKKKNFQLKENLFFLNEFGSRTMGYNLRDLSALTNEVLLISITKNRSFIDTDTLKLAFHRQIFGLTYTNNKLNFDRIFKIVIYKVGKTIIQNILIKSSSMNLLNIGNFLWKKNFYYLSKWYLEPSIDESIIKELTILTHILACLAGTAARDSWFLLEKKAESLLPIDKLVENDFTLAFSILESFFSEFPWLEICQTNVVNSKKNKIIEFSTKNSMNIMQNGIFAIANKKFIYTQNHLQYKSSLSQQISFNKKKNYEFKNTSWSPRFWRLSFFRSNLFDWIKRPNDFEFSYKFGFTKKKEYLFSANLQKKNNYGQFIEKKKKEQLLYERILPRIRRRNVQELESQFEEILLEEQFEILGFFRLSEQYPMEYQLYNKPRLFIGKRILWDPIGLFFQIRHFVFSRREFFVDEEMLRRLYVTYGARRERERSRSSQKIKQFFLCRGYNKDLISKLSIRWWSQLPINEKKNIDTLKRIEHISIQLKRPQIFTPVYLYQRWLIENSPEKFFRFELLTHRKKWLKINSLLLNDSFIYTTLLEIYEYLLHFFIANKKLLNQMTKILLKKGWLFENEIETIINETRQ</sequence>
<feature type="chain" id="PRO_0000223057" description="Protein Ycf2">
    <location>
        <begin position="1"/>
        <end position="2136"/>
    </location>
</feature>
<feature type="binding site" evidence="1">
    <location>
        <begin position="1404"/>
        <end position="1411"/>
    </location>
    <ligand>
        <name>ATP</name>
        <dbReference type="ChEBI" id="CHEBI:30616"/>
    </ligand>
</feature>
<gene>
    <name evidence="1" type="primary">ycf2</name>
</gene>
<geneLocation type="chloroplast"/>
<accession>P09975</accession>